<name>MYADM_RAT</name>
<reference key="1">
    <citation type="submission" date="2003-07" db="EMBL/GenBank/DDBJ databases">
        <title>Cloning of myeloid-associated differentiation marker.</title>
        <authorList>
            <person name="Zhou G."/>
            <person name="Dang Y."/>
            <person name="Jiang L."/>
        </authorList>
    </citation>
    <scope>NUCLEOTIDE SEQUENCE [MRNA]</scope>
    <source>
        <strain>Sprague-Dawley</strain>
    </source>
</reference>
<reference key="2">
    <citation type="journal article" date="2012" name="Nat. Commun.">
        <title>Quantitative maps of protein phosphorylation sites across 14 different rat organs and tissues.</title>
        <authorList>
            <person name="Lundby A."/>
            <person name="Secher A."/>
            <person name="Lage K."/>
            <person name="Nordsborg N.B."/>
            <person name="Dmytriyev A."/>
            <person name="Lundby C."/>
            <person name="Olsen J.V."/>
        </authorList>
    </citation>
    <scope>IDENTIFICATION BY MASS SPECTROMETRY [LARGE SCALE ANALYSIS]</scope>
</reference>
<dbReference type="EMBL" id="AY344060">
    <property type="protein sequence ID" value="AAQ22727.1"/>
    <property type="molecule type" value="mRNA"/>
</dbReference>
<dbReference type="RefSeq" id="NP_899161.1">
    <property type="nucleotide sequence ID" value="NM_183332.1"/>
</dbReference>
<dbReference type="BioGRID" id="266784">
    <property type="interactions" value="3"/>
</dbReference>
<dbReference type="FunCoup" id="Q6VBQ5">
    <property type="interactions" value="445"/>
</dbReference>
<dbReference type="IntAct" id="Q6VBQ5">
    <property type="interactions" value="2"/>
</dbReference>
<dbReference type="MINT" id="Q6VBQ5"/>
<dbReference type="STRING" id="10116.ENSRNOP00000074552"/>
<dbReference type="iPTMnet" id="Q6VBQ5"/>
<dbReference type="PhosphoSitePlus" id="Q6VBQ5"/>
<dbReference type="SwissPalm" id="Q6VBQ5"/>
<dbReference type="jPOST" id="Q6VBQ5"/>
<dbReference type="PaxDb" id="10116-ENSRNOP00000022264"/>
<dbReference type="GeneID" id="369016"/>
<dbReference type="KEGG" id="rno:369016"/>
<dbReference type="UCSC" id="RGD:727835">
    <property type="organism name" value="rat"/>
</dbReference>
<dbReference type="AGR" id="RGD:727835"/>
<dbReference type="CTD" id="91663"/>
<dbReference type="RGD" id="727835">
    <property type="gene designation" value="Myadm"/>
</dbReference>
<dbReference type="eggNOG" id="KOG4788">
    <property type="taxonomic scope" value="Eukaryota"/>
</dbReference>
<dbReference type="InParanoid" id="Q6VBQ5"/>
<dbReference type="OrthoDB" id="8737882at2759"/>
<dbReference type="PhylomeDB" id="Q6VBQ5"/>
<dbReference type="PRO" id="PR:Q6VBQ5"/>
<dbReference type="Proteomes" id="UP000002494">
    <property type="component" value="Unplaced"/>
</dbReference>
<dbReference type="GO" id="GO:0005911">
    <property type="term" value="C:cell-cell junction"/>
    <property type="evidence" value="ECO:0000266"/>
    <property type="project" value="RGD"/>
</dbReference>
<dbReference type="GO" id="GO:0030864">
    <property type="term" value="C:cortical actin cytoskeleton"/>
    <property type="evidence" value="ECO:0000266"/>
    <property type="project" value="RGD"/>
</dbReference>
<dbReference type="GO" id="GO:0045121">
    <property type="term" value="C:membrane raft"/>
    <property type="evidence" value="ECO:0000266"/>
    <property type="project" value="RGD"/>
</dbReference>
<dbReference type="GO" id="GO:0005886">
    <property type="term" value="C:plasma membrane"/>
    <property type="evidence" value="ECO:0000266"/>
    <property type="project" value="RGD"/>
</dbReference>
<dbReference type="GO" id="GO:0001726">
    <property type="term" value="C:ruffle"/>
    <property type="evidence" value="ECO:0000266"/>
    <property type="project" value="RGD"/>
</dbReference>
<dbReference type="GO" id="GO:0061028">
    <property type="term" value="P:establishment of endothelial barrier"/>
    <property type="evidence" value="ECO:0000266"/>
    <property type="project" value="RGD"/>
</dbReference>
<dbReference type="GO" id="GO:0035556">
    <property type="term" value="P:intracellular signal transduction"/>
    <property type="evidence" value="ECO:0000266"/>
    <property type="project" value="RGD"/>
</dbReference>
<dbReference type="GO" id="GO:0031579">
    <property type="term" value="P:membrane raft organization"/>
    <property type="evidence" value="ECO:0000266"/>
    <property type="project" value="RGD"/>
</dbReference>
<dbReference type="GO" id="GO:0030837">
    <property type="term" value="P:negative regulation of actin filament polymerization"/>
    <property type="evidence" value="ECO:0000266"/>
    <property type="project" value="RGD"/>
</dbReference>
<dbReference type="GO" id="GO:0010629">
    <property type="term" value="P:negative regulation of gene expression"/>
    <property type="evidence" value="ECO:0000266"/>
    <property type="project" value="RGD"/>
</dbReference>
<dbReference type="GO" id="GO:0034115">
    <property type="term" value="P:negative regulation of heterotypic cell-cell adhesion"/>
    <property type="evidence" value="ECO:0000266"/>
    <property type="project" value="RGD"/>
</dbReference>
<dbReference type="GO" id="GO:0030335">
    <property type="term" value="P:positive regulation of cell migration"/>
    <property type="evidence" value="ECO:0000266"/>
    <property type="project" value="RGD"/>
</dbReference>
<dbReference type="GO" id="GO:1900026">
    <property type="term" value="P:positive regulation of substrate adhesion-dependent cell spreading"/>
    <property type="evidence" value="ECO:0000266"/>
    <property type="project" value="RGD"/>
</dbReference>
<dbReference type="GO" id="GO:0044860">
    <property type="term" value="P:protein localization to plasma membrane raft"/>
    <property type="evidence" value="ECO:0000266"/>
    <property type="project" value="RGD"/>
</dbReference>
<dbReference type="InterPro" id="IPR008253">
    <property type="entry name" value="Marvel"/>
</dbReference>
<dbReference type="InterPro" id="IPR047123">
    <property type="entry name" value="MYADM-like"/>
</dbReference>
<dbReference type="PANTHER" id="PTHR17068:SF3">
    <property type="entry name" value="MYELOID-ASSOCIATED DIFFERENTIATION MARKER"/>
    <property type="match status" value="1"/>
</dbReference>
<dbReference type="PANTHER" id="PTHR17068">
    <property type="entry name" value="MYELOID-ASSOCIATED DIFFERENTIATION MARKER MYADM FAMILY MEMBER"/>
    <property type="match status" value="1"/>
</dbReference>
<dbReference type="Pfam" id="PF01284">
    <property type="entry name" value="MARVEL"/>
    <property type="match status" value="2"/>
</dbReference>
<dbReference type="PROSITE" id="PS51225">
    <property type="entry name" value="MARVEL"/>
    <property type="match status" value="2"/>
</dbReference>
<comment type="subcellular location">
    <subcellularLocation>
        <location evidence="3">Membrane</location>
        <topology evidence="3">Multi-pass membrane protein</topology>
    </subcellularLocation>
</comment>
<comment type="similarity">
    <text evidence="3">Belongs to the MAL family.</text>
</comment>
<evidence type="ECO:0000255" key="1"/>
<evidence type="ECO:0000255" key="2">
    <source>
        <dbReference type="PROSITE-ProRule" id="PRU00581"/>
    </source>
</evidence>
<evidence type="ECO:0000305" key="3"/>
<organism>
    <name type="scientific">Rattus norvegicus</name>
    <name type="common">Rat</name>
    <dbReference type="NCBI Taxonomy" id="10116"/>
    <lineage>
        <taxon>Eukaryota</taxon>
        <taxon>Metazoa</taxon>
        <taxon>Chordata</taxon>
        <taxon>Craniata</taxon>
        <taxon>Vertebrata</taxon>
        <taxon>Euteleostomi</taxon>
        <taxon>Mammalia</taxon>
        <taxon>Eutheria</taxon>
        <taxon>Euarchontoglires</taxon>
        <taxon>Glires</taxon>
        <taxon>Rodentia</taxon>
        <taxon>Myomorpha</taxon>
        <taxon>Muroidea</taxon>
        <taxon>Muridae</taxon>
        <taxon>Murinae</taxon>
        <taxon>Rattus</taxon>
    </lineage>
</organism>
<proteinExistence type="evidence at protein level"/>
<keyword id="KW-0472">Membrane</keyword>
<keyword id="KW-1185">Reference proteome</keyword>
<keyword id="KW-0677">Repeat</keyword>
<keyword id="KW-0812">Transmembrane</keyword>
<keyword id="KW-1133">Transmembrane helix</keyword>
<protein>
    <recommendedName>
        <fullName>Myeloid-associated differentiation marker</fullName>
    </recommendedName>
    <alternativeName>
        <fullName>Myeloid up-regulated protein</fullName>
    </alternativeName>
</protein>
<sequence>MPVTVTRTTITTTSSSSTTVGSARALTQPLGLLRLLQLVSTCVAFSLVASVGAWTGPMGNWAMFTWCFCFAVTLIILIEELGGFQARFPLSWRNFPITFACYAALFCLSSSIIYPTTYVQFLPHGRSRDHAIAATTFSCVACLAYATEVAWTRARPGEITGYMATVPGLLKVFETFVACIIFAFISEPSLYQQRPALEWCVAVYAICFILAAVTVLLNLGDCTNMLPIPFPTFLSGLALLSVLLYATAIVLWPLYQFDQRYNSQPRRSMDPSCSRSYVQPNEVCNWDRRLAVSILTGINLLAYVSDLVYSTRLVFVKV</sequence>
<accession>Q6VBQ5</accession>
<gene>
    <name type="primary">Myadm</name>
</gene>
<feature type="chain" id="PRO_0000232596" description="Myeloid-associated differentiation marker">
    <location>
        <begin position="1"/>
        <end position="318"/>
    </location>
</feature>
<feature type="transmembrane region" description="Helical" evidence="1">
    <location>
        <begin position="35"/>
        <end position="55"/>
    </location>
</feature>
<feature type="transmembrane region" description="Helical" evidence="1">
    <location>
        <begin position="58"/>
        <end position="78"/>
    </location>
</feature>
<feature type="transmembrane region" description="Helical" evidence="1">
    <location>
        <begin position="95"/>
        <end position="115"/>
    </location>
</feature>
<feature type="transmembrane region" description="Helical" evidence="1">
    <location>
        <begin position="131"/>
        <end position="151"/>
    </location>
</feature>
<feature type="transmembrane region" description="Helical" evidence="1">
    <location>
        <begin position="165"/>
        <end position="185"/>
    </location>
</feature>
<feature type="transmembrane region" description="Helical" evidence="1">
    <location>
        <begin position="197"/>
        <end position="217"/>
    </location>
</feature>
<feature type="transmembrane region" description="Helical" evidence="1">
    <location>
        <begin position="233"/>
        <end position="253"/>
    </location>
</feature>
<feature type="transmembrane region" description="Helical" evidence="1">
    <location>
        <begin position="290"/>
        <end position="310"/>
    </location>
</feature>
<feature type="domain" description="MARVEL 1" evidence="2">
    <location>
        <begin position="25"/>
        <end position="157"/>
    </location>
</feature>
<feature type="domain" description="MARVEL 2" evidence="2">
    <location>
        <begin position="162"/>
        <end position="315"/>
    </location>
</feature>